<feature type="chain" id="PRO_0000261441" description="Cdc42-interacting protein 4">
    <location>
        <begin position="1"/>
        <end position="547"/>
    </location>
</feature>
<feature type="domain" description="F-BAR" evidence="4">
    <location>
        <begin position="1"/>
        <end position="264"/>
    </location>
</feature>
<feature type="domain" description="REM-1" evidence="5">
    <location>
        <begin position="337"/>
        <end position="414"/>
    </location>
</feature>
<feature type="domain" description="SH3" evidence="3">
    <location>
        <begin position="486"/>
        <end position="547"/>
    </location>
</feature>
<feature type="region of interest" description="Required for translocation to the plasma membrane in response to insulin, podosome formation and interaction with AKAP9 and microtubules" evidence="1">
    <location>
        <begin position="1"/>
        <end position="117"/>
    </location>
</feature>
<feature type="region of interest" description="Interaction with PDE6G" evidence="7">
    <location>
        <begin position="293"/>
        <end position="547"/>
    </location>
</feature>
<feature type="region of interest" description="Interaction with CDC42" evidence="1">
    <location>
        <begin position="293"/>
        <end position="483"/>
    </location>
</feature>
<feature type="region of interest" description="Disordered" evidence="6">
    <location>
        <begin position="294"/>
        <end position="323"/>
    </location>
</feature>
<feature type="region of interest" description="Required for interaction with FASLG and localization to lysosomes" evidence="1">
    <location>
        <begin position="415"/>
        <end position="547"/>
    </location>
</feature>
<feature type="region of interest" description="Disordered" evidence="6">
    <location>
        <begin position="420"/>
        <end position="485"/>
    </location>
</feature>
<feature type="region of interest" description="Interaction with DNM2 and WASL" evidence="1">
    <location>
        <begin position="431"/>
        <end position="487"/>
    </location>
</feature>
<feature type="region of interest" description="Interaction with DNM1 and WASL" evidence="1">
    <location>
        <begin position="476"/>
        <end position="547"/>
    </location>
</feature>
<feature type="region of interest" description="Required for podosome formation" evidence="1">
    <location>
        <begin position="484"/>
        <end position="547"/>
    </location>
</feature>
<feature type="region of interest" description="Interaction with WAS" evidence="1">
    <location>
        <begin position="490"/>
        <end position="547"/>
    </location>
</feature>
<feature type="region of interest" description="Interaction with ARHGAP17, DAAM1, DIAPH1 and DIAPH2" evidence="1">
    <location>
        <begin position="492"/>
        <end position="547"/>
    </location>
</feature>
<feature type="coiled-coil region" evidence="1">
    <location>
        <begin position="67"/>
        <end position="259"/>
    </location>
</feature>
<feature type="coiled-coil region" evidence="1">
    <location>
        <begin position="332"/>
        <end position="425"/>
    </location>
</feature>
<feature type="compositionally biased region" description="Low complexity" evidence="6">
    <location>
        <begin position="441"/>
        <end position="451"/>
    </location>
</feature>
<feature type="site" description="Mediates end-to-end attachment of dimers" evidence="1">
    <location>
        <position position="166"/>
    </location>
</feature>
<feature type="modified residue" description="Phosphoserine" evidence="10">
    <location>
        <position position="296"/>
    </location>
</feature>
<feature type="modified residue" description="Phosphoserine" evidence="2">
    <location>
        <position position="298"/>
    </location>
</feature>
<feature type="modified residue" description="Phosphoserine" evidence="2">
    <location>
        <position position="299"/>
    </location>
</feature>
<feature type="modified residue" description="Phosphoserine" evidence="2">
    <location>
        <position position="426"/>
    </location>
</feature>
<feature type="sequence conflict" description="In Ref. 1; BAA22191." evidence="9" ref="1">
    <original>KL</original>
    <variation>NV</variation>
    <location>
        <begin position="402"/>
        <end position="403"/>
    </location>
</feature>
<feature type="sequence conflict" description="In Ref. 1; BAA22191." evidence="9" ref="1">
    <original>S</original>
    <variation>T</variation>
    <location>
        <position position="417"/>
    </location>
</feature>
<feature type="sequence conflict" description="In Ref. 1; BAA22191." evidence="9" ref="1">
    <original>K</original>
    <variation>M</variation>
    <location>
        <position position="457"/>
    </location>
</feature>
<protein>
    <recommendedName>
        <fullName>Cdc42-interacting protein 4</fullName>
    </recommendedName>
    <alternativeName>
        <fullName>Salt tolerant protein</fullName>
    </alternativeName>
    <alternativeName>
        <fullName>Thyroid receptor-interacting protein 10</fullName>
        <shortName>TR-interacting protein 10</shortName>
        <shortName>TRIP-10</shortName>
    </alternativeName>
</protein>
<keyword id="KW-1003">Cell membrane</keyword>
<keyword id="KW-0966">Cell projection</keyword>
<keyword id="KW-0175">Coiled coil</keyword>
<keyword id="KW-0963">Cytoplasm</keyword>
<keyword id="KW-0206">Cytoskeleton</keyword>
<keyword id="KW-0903">Direct protein sequencing</keyword>
<keyword id="KW-0254">Endocytosis</keyword>
<keyword id="KW-0333">Golgi apparatus</keyword>
<keyword id="KW-0446">Lipid-binding</keyword>
<keyword id="KW-0458">Lysosome</keyword>
<keyword id="KW-0472">Membrane</keyword>
<keyword id="KW-0597">Phosphoprotein</keyword>
<keyword id="KW-1185">Reference proteome</keyword>
<keyword id="KW-0728">SH3 domain</keyword>
<organism>
    <name type="scientific">Rattus norvegicus</name>
    <name type="common">Rat</name>
    <dbReference type="NCBI Taxonomy" id="10116"/>
    <lineage>
        <taxon>Eukaryota</taxon>
        <taxon>Metazoa</taxon>
        <taxon>Chordata</taxon>
        <taxon>Craniata</taxon>
        <taxon>Vertebrata</taxon>
        <taxon>Euteleostomi</taxon>
        <taxon>Mammalia</taxon>
        <taxon>Eutheria</taxon>
        <taxon>Euarchontoglires</taxon>
        <taxon>Glires</taxon>
        <taxon>Rodentia</taxon>
        <taxon>Myomorpha</taxon>
        <taxon>Muroidea</taxon>
        <taxon>Muridae</taxon>
        <taxon>Murinae</taxon>
        <taxon>Rattus</taxon>
    </lineage>
</organism>
<proteinExistence type="evidence at protein level"/>
<reference key="1">
    <citation type="journal article" date="1996" name="Biochem. Biophys. Res. Commun.">
        <title>Molecular cloning of a novel rat salt-tolerant protein by functional complementation in yeast.</title>
        <authorList>
            <person name="Tsuji E."/>
            <person name="Tsuji Y."/>
            <person name="Misumi Y."/>
            <person name="Fujita A."/>
            <person name="Sasaguri M."/>
            <person name="Ideishi M."/>
            <person name="Arakawa K."/>
        </authorList>
    </citation>
    <scope>NUCLEOTIDE SEQUENCE [MRNA]</scope>
    <scope>TISSUE SPECIFICITY</scope>
    <source>
        <strain>Wistar</strain>
        <tissue>Kidney</tissue>
    </source>
</reference>
<reference key="2">
    <citation type="journal article" date="2004" name="Genome Res.">
        <title>The status, quality, and expansion of the NIH full-length cDNA project: the Mammalian Gene Collection (MGC).</title>
        <authorList>
            <consortium name="The MGC Project Team"/>
        </authorList>
    </citation>
    <scope>NUCLEOTIDE SEQUENCE [LARGE SCALE MRNA]</scope>
    <source>
        <tissue>Prostate</tissue>
    </source>
</reference>
<reference key="3">
    <citation type="submission" date="2009-01" db="UniProtKB">
        <authorList>
            <person name="Lubec G."/>
            <person name="Chen W.-Q."/>
        </authorList>
    </citation>
    <scope>PROTEIN SEQUENCE OF 391-402</scope>
    <scope>IDENTIFICATION BY MASS SPECTROMETRY</scope>
    <source>
        <strain>Sprague-Dawley</strain>
        <tissue>Hippocampus</tissue>
    </source>
</reference>
<reference key="4">
    <citation type="journal article" date="2003" name="Mol. Vis.">
        <title>A proline-rich domain in the gamma subunit of phosphodiesterase 6 mediates interaction with SH3-containing proteins.</title>
        <authorList>
            <person name="Morin F."/>
            <person name="Vannier B."/>
            <person name="Houdart F."/>
            <person name="Regnacq M."/>
            <person name="Berges T."/>
            <person name="Voisin P."/>
        </authorList>
    </citation>
    <scope>INTERACTION WITH PDE6G</scope>
</reference>
<reference key="5">
    <citation type="journal article" date="2012" name="Nat. Commun.">
        <title>Quantitative maps of protein phosphorylation sites across 14 different rat organs and tissues.</title>
        <authorList>
            <person name="Lundby A."/>
            <person name="Secher A."/>
            <person name="Lage K."/>
            <person name="Nordsborg N.B."/>
            <person name="Dmytriyev A."/>
            <person name="Lundby C."/>
            <person name="Olsen J.V."/>
        </authorList>
    </citation>
    <scope>PHOSPHORYLATION [LARGE SCALE ANALYSIS] AT SER-296</scope>
    <scope>IDENTIFICATION BY MASS SPECTROMETRY [LARGE SCALE ANALYSIS]</scope>
</reference>
<gene>
    <name type="primary">Trip10</name>
    <name type="synonym">Cip4</name>
    <name type="synonym">Stp</name>
</gene>
<dbReference type="EMBL" id="AB006914">
    <property type="protein sequence ID" value="BAA22191.1"/>
    <property type="molecule type" value="mRNA"/>
</dbReference>
<dbReference type="EMBL" id="BC061840">
    <property type="protein sequence ID" value="AAH61840.1"/>
    <property type="molecule type" value="mRNA"/>
</dbReference>
<dbReference type="PIR" id="JC5261">
    <property type="entry name" value="JC5261"/>
</dbReference>
<dbReference type="RefSeq" id="NP_446372.2">
    <property type="nucleotide sequence ID" value="NM_053920.3"/>
</dbReference>
<dbReference type="SMR" id="P97531"/>
<dbReference type="BioGRID" id="250584">
    <property type="interactions" value="1"/>
</dbReference>
<dbReference type="FunCoup" id="P97531">
    <property type="interactions" value="1745"/>
</dbReference>
<dbReference type="STRING" id="10116.ENSRNOP00000074397"/>
<dbReference type="iPTMnet" id="P97531"/>
<dbReference type="PhosphoSitePlus" id="P97531"/>
<dbReference type="SwissPalm" id="P97531"/>
<dbReference type="jPOST" id="P97531"/>
<dbReference type="GeneID" id="116717"/>
<dbReference type="KEGG" id="rno:116717"/>
<dbReference type="AGR" id="RGD:621145"/>
<dbReference type="CTD" id="9322"/>
<dbReference type="RGD" id="621145">
    <property type="gene designation" value="Trip10"/>
</dbReference>
<dbReference type="InParanoid" id="P97531"/>
<dbReference type="PhylomeDB" id="P97531"/>
<dbReference type="Reactome" id="R-RNO-8856828">
    <property type="pathway name" value="Clathrin-mediated endocytosis"/>
</dbReference>
<dbReference type="Reactome" id="R-RNO-9013406">
    <property type="pathway name" value="RHOQ GTPase cycle"/>
</dbReference>
<dbReference type="PRO" id="PR:P97531"/>
<dbReference type="Proteomes" id="UP000002494">
    <property type="component" value="Unplaced"/>
</dbReference>
<dbReference type="GO" id="GO:0005938">
    <property type="term" value="C:cell cortex"/>
    <property type="evidence" value="ECO:0007669"/>
    <property type="project" value="UniProtKB-SubCell"/>
</dbReference>
<dbReference type="GO" id="GO:0042995">
    <property type="term" value="C:cell projection"/>
    <property type="evidence" value="ECO:0007669"/>
    <property type="project" value="UniProtKB-KW"/>
</dbReference>
<dbReference type="GO" id="GO:0005856">
    <property type="term" value="C:cytoskeleton"/>
    <property type="evidence" value="ECO:0007669"/>
    <property type="project" value="UniProtKB-SubCell"/>
</dbReference>
<dbReference type="GO" id="GO:0005794">
    <property type="term" value="C:Golgi apparatus"/>
    <property type="evidence" value="ECO:0007669"/>
    <property type="project" value="UniProtKB-SubCell"/>
</dbReference>
<dbReference type="GO" id="GO:0005764">
    <property type="term" value="C:lysosome"/>
    <property type="evidence" value="ECO:0007669"/>
    <property type="project" value="UniProtKB-SubCell"/>
</dbReference>
<dbReference type="GO" id="GO:0001891">
    <property type="term" value="C:phagocytic cup"/>
    <property type="evidence" value="ECO:0007669"/>
    <property type="project" value="UniProtKB-SubCell"/>
</dbReference>
<dbReference type="GO" id="GO:0042802">
    <property type="term" value="F:identical protein binding"/>
    <property type="evidence" value="ECO:0000266"/>
    <property type="project" value="RGD"/>
</dbReference>
<dbReference type="GO" id="GO:0008289">
    <property type="term" value="F:lipid binding"/>
    <property type="evidence" value="ECO:0007669"/>
    <property type="project" value="UniProtKB-KW"/>
</dbReference>
<dbReference type="GO" id="GO:0006897">
    <property type="term" value="P:endocytosis"/>
    <property type="evidence" value="ECO:0007669"/>
    <property type="project" value="UniProtKB-KW"/>
</dbReference>
<dbReference type="GO" id="GO:0001837">
    <property type="term" value="P:epithelial to mesenchymal transition"/>
    <property type="evidence" value="ECO:0000315"/>
    <property type="project" value="RGD"/>
</dbReference>
<dbReference type="GO" id="GO:0010667">
    <property type="term" value="P:negative regulation of cardiac muscle cell apoptotic process"/>
    <property type="evidence" value="ECO:0000315"/>
    <property type="project" value="RGD"/>
</dbReference>
<dbReference type="GO" id="GO:0061051">
    <property type="term" value="P:positive regulation of cell growth involved in cardiac muscle cell development"/>
    <property type="evidence" value="ECO:0000315"/>
    <property type="project" value="RGD"/>
</dbReference>
<dbReference type="GO" id="GO:0032094">
    <property type="term" value="P:response to food"/>
    <property type="evidence" value="ECO:0000270"/>
    <property type="project" value="RGD"/>
</dbReference>
<dbReference type="GO" id="GO:0007165">
    <property type="term" value="P:signal transduction"/>
    <property type="evidence" value="ECO:0007669"/>
    <property type="project" value="InterPro"/>
</dbReference>
<dbReference type="CDD" id="cd07653">
    <property type="entry name" value="F-BAR_CIP4-like"/>
    <property type="match status" value="1"/>
</dbReference>
<dbReference type="CDD" id="cd11628">
    <property type="entry name" value="HR1_CIP4_FNBP1L"/>
    <property type="match status" value="1"/>
</dbReference>
<dbReference type="CDD" id="cd11777">
    <property type="entry name" value="SH3_CIP4_Bzz1_like"/>
    <property type="match status" value="1"/>
</dbReference>
<dbReference type="FunFam" id="1.20.1270.60:FF:000002">
    <property type="entry name" value="Formin-binding protein 1-like isoform 1"/>
    <property type="match status" value="1"/>
</dbReference>
<dbReference type="FunFam" id="2.30.30.40:FF:000017">
    <property type="entry name" value="Formin-binding protein 1-like isoform 1"/>
    <property type="match status" value="1"/>
</dbReference>
<dbReference type="Gene3D" id="6.10.140.470">
    <property type="match status" value="1"/>
</dbReference>
<dbReference type="Gene3D" id="1.20.1270.60">
    <property type="entry name" value="Arfaptin homology (AH) domain/BAR domain"/>
    <property type="match status" value="1"/>
</dbReference>
<dbReference type="Gene3D" id="2.30.30.40">
    <property type="entry name" value="SH3 Domains"/>
    <property type="match status" value="1"/>
</dbReference>
<dbReference type="InterPro" id="IPR027267">
    <property type="entry name" value="AH/BAR_dom_sf"/>
</dbReference>
<dbReference type="InterPro" id="IPR031160">
    <property type="entry name" value="F_BAR"/>
</dbReference>
<dbReference type="InterPro" id="IPR001060">
    <property type="entry name" value="FCH_dom"/>
</dbReference>
<dbReference type="InterPro" id="IPR011072">
    <property type="entry name" value="HR1_rho-bd"/>
</dbReference>
<dbReference type="InterPro" id="IPR036028">
    <property type="entry name" value="SH3-like_dom_sf"/>
</dbReference>
<dbReference type="InterPro" id="IPR001452">
    <property type="entry name" value="SH3_domain"/>
</dbReference>
<dbReference type="PANTHER" id="PTHR15735:SF17">
    <property type="entry name" value="CDC42-INTERACTING PROTEIN 4"/>
    <property type="match status" value="1"/>
</dbReference>
<dbReference type="PANTHER" id="PTHR15735">
    <property type="entry name" value="FCH AND DOUBLE SH3 DOMAINS PROTEIN"/>
    <property type="match status" value="1"/>
</dbReference>
<dbReference type="Pfam" id="PF00611">
    <property type="entry name" value="FCH"/>
    <property type="match status" value="1"/>
</dbReference>
<dbReference type="Pfam" id="PF00018">
    <property type="entry name" value="SH3_1"/>
    <property type="match status" value="1"/>
</dbReference>
<dbReference type="SMART" id="SM00055">
    <property type="entry name" value="FCH"/>
    <property type="match status" value="1"/>
</dbReference>
<dbReference type="SMART" id="SM00326">
    <property type="entry name" value="SH3"/>
    <property type="match status" value="1"/>
</dbReference>
<dbReference type="SUPFAM" id="SSF103657">
    <property type="entry name" value="BAR/IMD domain-like"/>
    <property type="match status" value="1"/>
</dbReference>
<dbReference type="SUPFAM" id="SSF50044">
    <property type="entry name" value="SH3-domain"/>
    <property type="match status" value="1"/>
</dbReference>
<dbReference type="PROSITE" id="PS51741">
    <property type="entry name" value="F_BAR"/>
    <property type="match status" value="1"/>
</dbReference>
<dbReference type="PROSITE" id="PS51860">
    <property type="entry name" value="REM_1"/>
    <property type="match status" value="1"/>
</dbReference>
<dbReference type="PROSITE" id="PS50002">
    <property type="entry name" value="SH3"/>
    <property type="match status" value="1"/>
</dbReference>
<accession>P97531</accession>
<accession>Q6P744</accession>
<comment type="function">
    <text evidence="1">Required to coordinate membrane tubulation with reorganization of the actin cytoskeleton during endocytosis. Also acts as a link between CDC42 signaling and regulation of the actin cytoskeleton. Binds to lipids such as phosphatidylinositol 4,5-bisphosphate and phosphatidylserine and promotes membrane invagination and the formation of tubules. Also enhances actin polymerization in the vicinity of membrane tubules by recruiting WASL/N-WASP which in turn activates the Arp2/3 complex. Actin polymerization and dynamin may promote the fission of membrane tubules to form endocytic vesicles. Required for the formation of podosomes, actin-rich adhesion structures specific to monocyte-derived cells. Required for translocation of GLUT4 to the plasma membrane in response to insulin signaling. May be required for the lysosomal retention of FASLG/FASL (By similarity).</text>
</comment>
<comment type="subunit">
    <text evidence="1 7">Homodimerizes, the dimers can polymerize end-to-end to form filamentous structures. Interacts specifically with GTP-bound CDC42 and RHOQ. Interacts with AKAP9, ARHGAP17, DAAM1, DIAPH1, DIAPH2, DNM1, DNM2, FASLG/FASL, GAPVD1, LYN, microtubules, SRC, WAS/WASP and WASL/N-WASP. Interacts with the ligand binding domain of the thyroid receptor (TR) in the presence of thyroid hormone. May interact with CTNNB1 and HD/HTT (By similarity). Interacts with PDE6G.</text>
</comment>
<comment type="subcellular location">
    <subcellularLocation>
        <location evidence="1">Cytoplasm</location>
        <location evidence="1">Cytoskeleton</location>
    </subcellularLocation>
    <subcellularLocation>
        <location evidence="1">Cytoplasm</location>
        <location evidence="1">Cell cortex</location>
    </subcellularLocation>
    <subcellularLocation>
        <location evidence="1">Lysosome</location>
    </subcellularLocation>
    <subcellularLocation>
        <location evidence="1">Golgi apparatus</location>
    </subcellularLocation>
    <subcellularLocation>
        <location evidence="1">Cell membrane</location>
    </subcellularLocation>
    <subcellularLocation>
        <location evidence="1">Cell projection</location>
        <location evidence="1">Phagocytic cup</location>
    </subcellularLocation>
    <text evidence="1">Localizes to cortical regions coincident with F-actin, to lysosomes and to sites of phagocytosis in macrophages. Also localizes to the Golgi, and this requires AKAP9. Translocates to the plasma membrane in response to insulin stimulation, and this may require active RHOQ (By similarity).</text>
</comment>
<comment type="tissue specificity">
    <text evidence="8">Expressed in adrenal gland, aorta, brain, heart, kidney, liver, skeletal muscle and spleen.</text>
</comment>
<comment type="domain">
    <text evidence="1">The F-BAR domain binds the phospholipid membrane with its concave surface. The end-to-end polymerization of dimers of these domains provides a curved surface that fits best membranes with around 600 A diameter, and may drive tubulation (By similarity).</text>
</comment>
<comment type="similarity">
    <text evidence="9">Belongs to the FNBP1 family.</text>
</comment>
<name>CIP4_RAT</name>
<sequence>MDWGTELWDQFEVLERHTQWGLDLLDKYVKFVKERVEVEQSYAKQLRSLVKKYLPKRPAKDDPEIKFSQQQSFVQLLQEVNDFAGQRELVAESLGIRVCLELAKYSQEMKQERKMHFQEGRRAQQQLENGFKQLENSKRKFERDCREAEKAAHTAERLDQDINATKADVEKAKQQAHLRNHMAEESKNEYAAQLQRFNRDQAHFYFSQMPQIFDKLQDMDERRATRLGAGYGLLSEAELQVVPIIGKCLEGMKVAAESVDAKNDSKVLIELHKSGFARPGDLEFEDFSQVMNRVPSDSSLGTPDGRPELRAASSRSRAKRWPFGKKNKTVVTEDFSHLPPEQQRKRLQQQLEERNRELQKEEDQREALKKMKDVYEKTPQMGDPASLEPRIAETLGNIERLKLEVQKYEAWLAEAESRVLSNRGDSLSRHTRPPDPPTTAPPDSSSSSNNSGSQDNKESSEEPPSEEGQDTPIYTEFDEDFEEPASPIGQCVAIYHFEGSSEGTVSMSEGEDLSLMEEDKGDGWTRVRRKQGGEGYVPTSYLRVTLN</sequence>
<evidence type="ECO:0000250" key="1"/>
<evidence type="ECO:0000250" key="2">
    <source>
        <dbReference type="UniProtKB" id="Q15642"/>
    </source>
</evidence>
<evidence type="ECO:0000255" key="3">
    <source>
        <dbReference type="PROSITE-ProRule" id="PRU00192"/>
    </source>
</evidence>
<evidence type="ECO:0000255" key="4">
    <source>
        <dbReference type="PROSITE-ProRule" id="PRU01077"/>
    </source>
</evidence>
<evidence type="ECO:0000255" key="5">
    <source>
        <dbReference type="PROSITE-ProRule" id="PRU01207"/>
    </source>
</evidence>
<evidence type="ECO:0000256" key="6">
    <source>
        <dbReference type="SAM" id="MobiDB-lite"/>
    </source>
</evidence>
<evidence type="ECO:0000269" key="7">
    <source>
    </source>
</evidence>
<evidence type="ECO:0000269" key="8">
    <source>
    </source>
</evidence>
<evidence type="ECO:0000305" key="9"/>
<evidence type="ECO:0007744" key="10">
    <source>
    </source>
</evidence>